<accession>C9SV08</accession>
<keyword id="KW-0963">Cytoplasm</keyword>
<keyword id="KW-0396">Initiation factor</keyword>
<keyword id="KW-0539">Nucleus</keyword>
<keyword id="KW-0597">Phosphoprotein</keyword>
<keyword id="KW-0648">Protein biosynthesis</keyword>
<keyword id="KW-1185">Reference proteome</keyword>
<keyword id="KW-0690">Ribosome biogenesis</keyword>
<gene>
    <name evidence="1" type="primary">TIF6</name>
    <name type="ORF">VDBG_08733</name>
</gene>
<reference key="1">
    <citation type="journal article" date="2011" name="PLoS Pathog.">
        <title>Comparative genomics yields insights into niche adaptation of plant vascular wilt pathogens.</title>
        <authorList>
            <person name="Klosterman S.J."/>
            <person name="Subbarao K.V."/>
            <person name="Kang S."/>
            <person name="Veronese P."/>
            <person name="Gold S.E."/>
            <person name="Thomma B.P.H.J."/>
            <person name="Chen Z."/>
            <person name="Henrissat B."/>
            <person name="Lee Y.-H."/>
            <person name="Park J."/>
            <person name="Garcia-Pedrajas M.D."/>
            <person name="Barbara D.J."/>
            <person name="Anchieta A."/>
            <person name="de Jonge R."/>
            <person name="Santhanam P."/>
            <person name="Maruthachalam K."/>
            <person name="Atallah Z."/>
            <person name="Amyotte S.G."/>
            <person name="Paz Z."/>
            <person name="Inderbitzin P."/>
            <person name="Hayes R.J."/>
            <person name="Heiman D.I."/>
            <person name="Young S."/>
            <person name="Zeng Q."/>
            <person name="Engels R."/>
            <person name="Galagan J."/>
            <person name="Cuomo C.A."/>
            <person name="Dobinson K.F."/>
            <person name="Ma L.-J."/>
        </authorList>
    </citation>
    <scope>NUCLEOTIDE SEQUENCE [LARGE SCALE GENOMIC DNA]</scope>
    <source>
        <strain>VaMs.102 / ATCC MYA-4576 / FGSC 10136</strain>
    </source>
</reference>
<feature type="chain" id="PRO_0000402112" description="Eukaryotic translation initiation factor 6">
    <location>
        <begin position="1"/>
        <end position="246"/>
    </location>
</feature>
<feature type="modified residue" description="Phosphoserine; by CK1" evidence="1">
    <location>
        <position position="174"/>
    </location>
</feature>
<feature type="modified residue" description="Phosphoserine; by CK1" evidence="1">
    <location>
        <position position="175"/>
    </location>
</feature>
<evidence type="ECO:0000255" key="1">
    <source>
        <dbReference type="HAMAP-Rule" id="MF_03132"/>
    </source>
</evidence>
<evidence type="ECO:0000305" key="2"/>
<proteinExistence type="inferred from homology"/>
<comment type="function">
    <text evidence="1">Binds to the 60S ribosomal subunit and prevents its association with the 40S ribosomal subunit to form the 80S initiation complex in the cytoplasm. Is also involved in ribosome biogenesis. Associates with pre-60S subunits in the nucleus and is involved in its nuclear export.</text>
</comment>
<comment type="subunit">
    <text evidence="1">Monomer. Associates with the 60S ribosomal subunit.</text>
</comment>
<comment type="subcellular location">
    <subcellularLocation>
        <location evidence="1">Cytoplasm</location>
    </subcellularLocation>
    <subcellularLocation>
        <location evidence="1">Nucleus</location>
        <location evidence="1">Nucleolus</location>
    </subcellularLocation>
    <text evidence="1">Shuttles between cytoplasm and nucleus/nucleolus.</text>
</comment>
<comment type="PTM">
    <text evidence="1">Phosphorylation at Ser-174 and Ser-175 promotes nuclear export.</text>
</comment>
<comment type="similarity">
    <text evidence="1">Belongs to the eIF-6 family.</text>
</comment>
<comment type="sequence caution" evidence="2">
    <conflict type="frameshift">
        <sequence resource="EMBL-CDS" id="EEY22623"/>
    </conflict>
</comment>
<name>IF6_VERA1</name>
<organism>
    <name type="scientific">Verticillium alfalfae (strain VaMs.102 / ATCC MYA-4576 / FGSC 10136)</name>
    <name type="common">Verticillium wilt of alfalfa</name>
    <name type="synonym">Verticillium albo-atrum</name>
    <dbReference type="NCBI Taxonomy" id="526221"/>
    <lineage>
        <taxon>Eukaryota</taxon>
        <taxon>Fungi</taxon>
        <taxon>Dikarya</taxon>
        <taxon>Ascomycota</taxon>
        <taxon>Pezizomycotina</taxon>
        <taxon>Sordariomycetes</taxon>
        <taxon>Hypocreomycetidae</taxon>
        <taxon>Glomerellales</taxon>
        <taxon>Plectosphaerellaceae</taxon>
        <taxon>Verticillium</taxon>
    </lineage>
</organism>
<protein>
    <recommendedName>
        <fullName evidence="1">Eukaryotic translation initiation factor 6</fullName>
        <shortName evidence="1">eIF-6</shortName>
    </recommendedName>
</protein>
<sequence length="246" mass="26577">MAVRAQFENSNEVGVFATLTNSYALTAIGASENFYSVFEAELQDVIPICRTTIAGSRIIGRMTAGNRKGLLVPTNTTDQELQHLRNSLPDAIRIQRIEERLSALGNVIVTNDHIALVHPDIERETEEIIADVLGVEVFRQTIADNVLVGSYMSLSNQGGLVHPKTSIQDQDELSSLLQVPLVAGSVNRGSNVVGAGMVVNDWMAVTGLDTTATELSVIESVFRLGEGLGPSNINTGMKDTMVESFY</sequence>
<dbReference type="EMBL" id="DS985226">
    <property type="protein sequence ID" value="EEY22623.1"/>
    <property type="status" value="ALT_FRAME"/>
    <property type="molecule type" value="Genomic_DNA"/>
</dbReference>
<dbReference type="RefSeq" id="XP_003000937.1">
    <property type="nucleotide sequence ID" value="XM_003000891.1"/>
</dbReference>
<dbReference type="SMR" id="C9SV08"/>
<dbReference type="STRING" id="526221.C9SV08"/>
<dbReference type="GeneID" id="9534325"/>
<dbReference type="KEGG" id="val:VDBG_08733"/>
<dbReference type="eggNOG" id="KOG3185">
    <property type="taxonomic scope" value="Eukaryota"/>
</dbReference>
<dbReference type="HOGENOM" id="CLU_1365925_0_0_1"/>
<dbReference type="OrthoDB" id="4155914at2759"/>
<dbReference type="Proteomes" id="UP000008698">
    <property type="component" value="Unassembled WGS sequence"/>
</dbReference>
<dbReference type="GO" id="GO:0005737">
    <property type="term" value="C:cytoplasm"/>
    <property type="evidence" value="ECO:0007669"/>
    <property type="project" value="UniProtKB-SubCell"/>
</dbReference>
<dbReference type="GO" id="GO:0005730">
    <property type="term" value="C:nucleolus"/>
    <property type="evidence" value="ECO:0007669"/>
    <property type="project" value="UniProtKB-SubCell"/>
</dbReference>
<dbReference type="GO" id="GO:0043023">
    <property type="term" value="F:ribosomal large subunit binding"/>
    <property type="evidence" value="ECO:0007669"/>
    <property type="project" value="UniProtKB-UniRule"/>
</dbReference>
<dbReference type="GO" id="GO:0003743">
    <property type="term" value="F:translation initiation factor activity"/>
    <property type="evidence" value="ECO:0007669"/>
    <property type="project" value="UniProtKB-UniRule"/>
</dbReference>
<dbReference type="GO" id="GO:0042256">
    <property type="term" value="P:cytosolic ribosome assembly"/>
    <property type="evidence" value="ECO:0007669"/>
    <property type="project" value="UniProtKB-UniRule"/>
</dbReference>
<dbReference type="GO" id="GO:0042273">
    <property type="term" value="P:ribosomal large subunit biogenesis"/>
    <property type="evidence" value="ECO:0007669"/>
    <property type="project" value="UniProtKB-UniRule"/>
</dbReference>
<dbReference type="GO" id="GO:0000054">
    <property type="term" value="P:ribosomal subunit export from nucleus"/>
    <property type="evidence" value="ECO:0007669"/>
    <property type="project" value="UniProtKB-UniRule"/>
</dbReference>
<dbReference type="CDD" id="cd00527">
    <property type="entry name" value="IF6"/>
    <property type="match status" value="1"/>
</dbReference>
<dbReference type="FunFam" id="3.75.10.10:FF:000001">
    <property type="entry name" value="Eukaryotic translation initiation factor 6"/>
    <property type="match status" value="1"/>
</dbReference>
<dbReference type="Gene3D" id="3.75.10.10">
    <property type="entry name" value="L-arginine/glycine Amidinotransferase, Chain A"/>
    <property type="match status" value="1"/>
</dbReference>
<dbReference type="HAMAP" id="MF_00032">
    <property type="entry name" value="eIF_6"/>
    <property type="match status" value="1"/>
</dbReference>
<dbReference type="InterPro" id="IPR002769">
    <property type="entry name" value="eIF6"/>
</dbReference>
<dbReference type="NCBIfam" id="TIGR00323">
    <property type="entry name" value="eIF-6"/>
    <property type="match status" value="1"/>
</dbReference>
<dbReference type="PANTHER" id="PTHR10784">
    <property type="entry name" value="TRANSLATION INITIATION FACTOR 6"/>
    <property type="match status" value="1"/>
</dbReference>
<dbReference type="Pfam" id="PF01912">
    <property type="entry name" value="eIF-6"/>
    <property type="match status" value="1"/>
</dbReference>
<dbReference type="PIRSF" id="PIRSF006413">
    <property type="entry name" value="IF-6"/>
    <property type="match status" value="1"/>
</dbReference>
<dbReference type="SMART" id="SM00654">
    <property type="entry name" value="eIF6"/>
    <property type="match status" value="1"/>
</dbReference>
<dbReference type="SUPFAM" id="SSF55909">
    <property type="entry name" value="Pentein"/>
    <property type="match status" value="1"/>
</dbReference>